<name>THIG_SYNP6</name>
<sequence>MVATPDTTADVLTIAGRSFRSRLMTGTGKYRSFEQMRASIAASGCEIVTVAVRRVQTNAPGHEGLAEALDWQKIWMLPNTAGCATAEEAIRVARLGREMAKLLGQEDNNFVKLEVIPDSRYLLPDPIGTLQAAEQLVKEGFAVLPYINADPLLAKRLEEVGCATVMPLGSPIGSGQGIRNEANIRIIVENAKVPVVVDAGIGTASEAAQAMELGADALLINTAIAQAEDPARMAQAMAMATIAGRLAFQAGRIPTRSAAIASSPQTGLVGQSPATV</sequence>
<keyword id="KW-0963">Cytoplasm</keyword>
<keyword id="KW-0704">Schiff base</keyword>
<keyword id="KW-0784">Thiamine biosynthesis</keyword>
<keyword id="KW-0808">Transferase</keyword>
<protein>
    <recommendedName>
        <fullName evidence="1">Thiazole synthase</fullName>
        <ecNumber evidence="1">2.8.1.10</ecNumber>
    </recommendedName>
</protein>
<comment type="function">
    <text evidence="1">Catalyzes the rearrangement of 1-deoxy-D-xylulose 5-phosphate (DXP) to produce the thiazole phosphate moiety of thiamine. Sulfur is provided by the thiocarboxylate moiety of the carrier protein ThiS. In vitro, sulfur can be provided by H(2)S.</text>
</comment>
<comment type="catalytic activity">
    <reaction evidence="1">
        <text>[ThiS sulfur-carrier protein]-C-terminal-Gly-aminoethanethioate + 2-iminoacetate + 1-deoxy-D-xylulose 5-phosphate = [ThiS sulfur-carrier protein]-C-terminal Gly-Gly + 2-[(2R,5Z)-2-carboxy-4-methylthiazol-5(2H)-ylidene]ethyl phosphate + 2 H2O + H(+)</text>
        <dbReference type="Rhea" id="RHEA:26297"/>
        <dbReference type="Rhea" id="RHEA-COMP:12909"/>
        <dbReference type="Rhea" id="RHEA-COMP:19908"/>
        <dbReference type="ChEBI" id="CHEBI:15377"/>
        <dbReference type="ChEBI" id="CHEBI:15378"/>
        <dbReference type="ChEBI" id="CHEBI:57792"/>
        <dbReference type="ChEBI" id="CHEBI:62899"/>
        <dbReference type="ChEBI" id="CHEBI:77846"/>
        <dbReference type="ChEBI" id="CHEBI:90778"/>
        <dbReference type="ChEBI" id="CHEBI:232372"/>
        <dbReference type="EC" id="2.8.1.10"/>
    </reaction>
</comment>
<comment type="pathway">
    <text evidence="1">Cofactor biosynthesis; thiamine diphosphate biosynthesis.</text>
</comment>
<comment type="subunit">
    <text evidence="1">Homotetramer. Forms heterodimers with either ThiH or ThiS.</text>
</comment>
<comment type="subcellular location">
    <subcellularLocation>
        <location evidence="1">Cytoplasm</location>
    </subcellularLocation>
</comment>
<comment type="similarity">
    <text evidence="1">Belongs to the ThiG family.</text>
</comment>
<comment type="sequence caution" evidence="2">
    <conflict type="erroneous initiation">
        <sequence resource="EMBL-CDS" id="BAD79137"/>
    </conflict>
</comment>
<feature type="chain" id="PRO_0000162865" description="Thiazole synthase">
    <location>
        <begin position="1"/>
        <end position="276"/>
    </location>
</feature>
<feature type="active site" description="Schiff-base intermediate with DXP" evidence="1">
    <location>
        <position position="112"/>
    </location>
</feature>
<feature type="binding site" evidence="1">
    <location>
        <position position="173"/>
    </location>
    <ligand>
        <name>1-deoxy-D-xylulose 5-phosphate</name>
        <dbReference type="ChEBI" id="CHEBI:57792"/>
    </ligand>
</feature>
<feature type="binding site" evidence="1">
    <location>
        <begin position="199"/>
        <end position="200"/>
    </location>
    <ligand>
        <name>1-deoxy-D-xylulose 5-phosphate</name>
        <dbReference type="ChEBI" id="CHEBI:57792"/>
    </ligand>
</feature>
<feature type="binding site" evidence="1">
    <location>
        <begin position="221"/>
        <end position="222"/>
    </location>
    <ligand>
        <name>1-deoxy-D-xylulose 5-phosphate</name>
        <dbReference type="ChEBI" id="CHEBI:57792"/>
    </ligand>
</feature>
<organism>
    <name type="scientific">Synechococcus sp. (strain ATCC 27144 / PCC 6301 / SAUG 1402/1)</name>
    <name type="common">Anacystis nidulans</name>
    <dbReference type="NCBI Taxonomy" id="269084"/>
    <lineage>
        <taxon>Bacteria</taxon>
        <taxon>Bacillati</taxon>
        <taxon>Cyanobacteriota</taxon>
        <taxon>Cyanophyceae</taxon>
        <taxon>Synechococcales</taxon>
        <taxon>Synechococcaceae</taxon>
        <taxon>Synechococcus</taxon>
    </lineage>
</organism>
<accession>Q5N3I3</accession>
<reference key="1">
    <citation type="journal article" date="2007" name="Photosyn. Res.">
        <title>Complete nucleotide sequence of the freshwater unicellular cyanobacterium Synechococcus elongatus PCC 6301 chromosome: gene content and organization.</title>
        <authorList>
            <person name="Sugita C."/>
            <person name="Ogata K."/>
            <person name="Shikata M."/>
            <person name="Jikuya H."/>
            <person name="Takano J."/>
            <person name="Furumichi M."/>
            <person name="Kanehisa M."/>
            <person name="Omata T."/>
            <person name="Sugiura M."/>
            <person name="Sugita M."/>
        </authorList>
    </citation>
    <scope>NUCLEOTIDE SEQUENCE [LARGE SCALE GENOMIC DNA]</scope>
    <source>
        <strain>ATCC 27144 / PCC 6301 / SAUG 1402/1</strain>
    </source>
</reference>
<proteinExistence type="inferred from homology"/>
<dbReference type="EC" id="2.8.1.10" evidence="1"/>
<dbReference type="EMBL" id="AP008231">
    <property type="protein sequence ID" value="BAD79137.1"/>
    <property type="status" value="ALT_INIT"/>
    <property type="molecule type" value="Genomic_DNA"/>
</dbReference>
<dbReference type="SMR" id="Q5N3I3"/>
<dbReference type="KEGG" id="syc:syc0947_c"/>
<dbReference type="eggNOG" id="COG2022">
    <property type="taxonomic scope" value="Bacteria"/>
</dbReference>
<dbReference type="UniPathway" id="UPA00060"/>
<dbReference type="Proteomes" id="UP000001175">
    <property type="component" value="Chromosome"/>
</dbReference>
<dbReference type="GO" id="GO:0005737">
    <property type="term" value="C:cytoplasm"/>
    <property type="evidence" value="ECO:0007669"/>
    <property type="project" value="UniProtKB-SubCell"/>
</dbReference>
<dbReference type="GO" id="GO:1990107">
    <property type="term" value="F:thiazole synthase activity"/>
    <property type="evidence" value="ECO:0007669"/>
    <property type="project" value="UniProtKB-EC"/>
</dbReference>
<dbReference type="GO" id="GO:0009229">
    <property type="term" value="P:thiamine diphosphate biosynthetic process"/>
    <property type="evidence" value="ECO:0007669"/>
    <property type="project" value="UniProtKB-UniRule"/>
</dbReference>
<dbReference type="CDD" id="cd04728">
    <property type="entry name" value="ThiG"/>
    <property type="match status" value="1"/>
</dbReference>
<dbReference type="Gene3D" id="3.20.20.70">
    <property type="entry name" value="Aldolase class I"/>
    <property type="match status" value="1"/>
</dbReference>
<dbReference type="HAMAP" id="MF_00443">
    <property type="entry name" value="ThiG"/>
    <property type="match status" value="1"/>
</dbReference>
<dbReference type="InterPro" id="IPR013785">
    <property type="entry name" value="Aldolase_TIM"/>
</dbReference>
<dbReference type="InterPro" id="IPR033983">
    <property type="entry name" value="Thiazole_synthase_ThiG"/>
</dbReference>
<dbReference type="InterPro" id="IPR008867">
    <property type="entry name" value="ThiG"/>
</dbReference>
<dbReference type="PANTHER" id="PTHR34266">
    <property type="entry name" value="THIAZOLE SYNTHASE"/>
    <property type="match status" value="1"/>
</dbReference>
<dbReference type="PANTHER" id="PTHR34266:SF2">
    <property type="entry name" value="THIAZOLE SYNTHASE"/>
    <property type="match status" value="1"/>
</dbReference>
<dbReference type="Pfam" id="PF05690">
    <property type="entry name" value="ThiG"/>
    <property type="match status" value="1"/>
</dbReference>
<dbReference type="SUPFAM" id="SSF110399">
    <property type="entry name" value="ThiG-like"/>
    <property type="match status" value="1"/>
</dbReference>
<evidence type="ECO:0000255" key="1">
    <source>
        <dbReference type="HAMAP-Rule" id="MF_00443"/>
    </source>
</evidence>
<evidence type="ECO:0000305" key="2"/>
<gene>
    <name evidence="1" type="primary">thiG</name>
    <name type="ordered locus">syc0947_c</name>
</gene>